<sequence>MYIAFEGVDCVGKSTQIELLKKCFKDAIFTKEPGGSELGVHLRKILLESKMQFSKKAELLLFLADRANLIDIHLVQNKNKLIISDRSFVSNMAYAKFDFDQNILFDLNSFATGGFFPQKIVFLHGSKELIEQRLSKKNLDSIEKRGVEYFLNIQNALEETLEILKTKIDIKILKLDASLSIENLHEKIKEFIND</sequence>
<gene>
    <name evidence="1" type="primary">tmk</name>
    <name type="ordered locus">Cla_0744</name>
</gene>
<evidence type="ECO:0000255" key="1">
    <source>
        <dbReference type="HAMAP-Rule" id="MF_00165"/>
    </source>
</evidence>
<protein>
    <recommendedName>
        <fullName evidence="1">Thymidylate kinase</fullName>
        <ecNumber evidence="1">2.7.4.9</ecNumber>
    </recommendedName>
    <alternativeName>
        <fullName evidence="1">dTMP kinase</fullName>
    </alternativeName>
</protein>
<feature type="chain" id="PRO_1000123565" description="Thymidylate kinase">
    <location>
        <begin position="1"/>
        <end position="194"/>
    </location>
</feature>
<feature type="binding site" evidence="1">
    <location>
        <begin position="7"/>
        <end position="14"/>
    </location>
    <ligand>
        <name>ATP</name>
        <dbReference type="ChEBI" id="CHEBI:30616"/>
    </ligand>
</feature>
<organism>
    <name type="scientific">Campylobacter lari (strain RM2100 / D67 / ATCC BAA-1060)</name>
    <dbReference type="NCBI Taxonomy" id="306263"/>
    <lineage>
        <taxon>Bacteria</taxon>
        <taxon>Pseudomonadati</taxon>
        <taxon>Campylobacterota</taxon>
        <taxon>Epsilonproteobacteria</taxon>
        <taxon>Campylobacterales</taxon>
        <taxon>Campylobacteraceae</taxon>
        <taxon>Campylobacter</taxon>
    </lineage>
</organism>
<proteinExistence type="inferred from homology"/>
<accession>B9KG87</accession>
<name>KTHY_CAMLR</name>
<keyword id="KW-0067">ATP-binding</keyword>
<keyword id="KW-0418">Kinase</keyword>
<keyword id="KW-0545">Nucleotide biosynthesis</keyword>
<keyword id="KW-0547">Nucleotide-binding</keyword>
<keyword id="KW-1185">Reference proteome</keyword>
<keyword id="KW-0808">Transferase</keyword>
<reference key="1">
    <citation type="journal article" date="2008" name="Foodborne Pathog. Dis.">
        <title>The complete genome sequence and analysis of the human pathogen Campylobacter lari.</title>
        <authorList>
            <person name="Miller W.G."/>
            <person name="Wang G."/>
            <person name="Binnewies T.T."/>
            <person name="Parker C.T."/>
        </authorList>
    </citation>
    <scope>NUCLEOTIDE SEQUENCE [LARGE SCALE GENOMIC DNA]</scope>
    <source>
        <strain>RM2100 / D67 / ATCC BAA-1060</strain>
    </source>
</reference>
<comment type="function">
    <text evidence="1">Phosphorylation of dTMP to form dTDP in both de novo and salvage pathways of dTTP synthesis.</text>
</comment>
<comment type="catalytic activity">
    <reaction evidence="1">
        <text>dTMP + ATP = dTDP + ADP</text>
        <dbReference type="Rhea" id="RHEA:13517"/>
        <dbReference type="ChEBI" id="CHEBI:30616"/>
        <dbReference type="ChEBI" id="CHEBI:58369"/>
        <dbReference type="ChEBI" id="CHEBI:63528"/>
        <dbReference type="ChEBI" id="CHEBI:456216"/>
        <dbReference type="EC" id="2.7.4.9"/>
    </reaction>
</comment>
<comment type="similarity">
    <text evidence="1">Belongs to the thymidylate kinase family.</text>
</comment>
<dbReference type="EC" id="2.7.4.9" evidence="1"/>
<dbReference type="EMBL" id="CP000932">
    <property type="protein sequence ID" value="ACM64072.1"/>
    <property type="molecule type" value="Genomic_DNA"/>
</dbReference>
<dbReference type="RefSeq" id="WP_012661455.1">
    <property type="nucleotide sequence ID" value="NC_012039.1"/>
</dbReference>
<dbReference type="SMR" id="B9KG87"/>
<dbReference type="STRING" id="306263.Cla_0744"/>
<dbReference type="KEGG" id="cla:CLA_0744"/>
<dbReference type="PATRIC" id="fig|306263.5.peg.724"/>
<dbReference type="eggNOG" id="COG0125">
    <property type="taxonomic scope" value="Bacteria"/>
</dbReference>
<dbReference type="HOGENOM" id="CLU_049131_0_0_7"/>
<dbReference type="Proteomes" id="UP000007727">
    <property type="component" value="Chromosome"/>
</dbReference>
<dbReference type="GO" id="GO:0005829">
    <property type="term" value="C:cytosol"/>
    <property type="evidence" value="ECO:0007669"/>
    <property type="project" value="TreeGrafter"/>
</dbReference>
<dbReference type="GO" id="GO:0005524">
    <property type="term" value="F:ATP binding"/>
    <property type="evidence" value="ECO:0007669"/>
    <property type="project" value="UniProtKB-UniRule"/>
</dbReference>
<dbReference type="GO" id="GO:0004798">
    <property type="term" value="F:dTMP kinase activity"/>
    <property type="evidence" value="ECO:0007669"/>
    <property type="project" value="UniProtKB-UniRule"/>
</dbReference>
<dbReference type="GO" id="GO:0006233">
    <property type="term" value="P:dTDP biosynthetic process"/>
    <property type="evidence" value="ECO:0007669"/>
    <property type="project" value="InterPro"/>
</dbReference>
<dbReference type="GO" id="GO:0006235">
    <property type="term" value="P:dTTP biosynthetic process"/>
    <property type="evidence" value="ECO:0007669"/>
    <property type="project" value="UniProtKB-UniRule"/>
</dbReference>
<dbReference type="GO" id="GO:0006227">
    <property type="term" value="P:dUDP biosynthetic process"/>
    <property type="evidence" value="ECO:0007669"/>
    <property type="project" value="TreeGrafter"/>
</dbReference>
<dbReference type="CDD" id="cd01672">
    <property type="entry name" value="TMPK"/>
    <property type="match status" value="1"/>
</dbReference>
<dbReference type="Gene3D" id="3.40.50.300">
    <property type="entry name" value="P-loop containing nucleotide triphosphate hydrolases"/>
    <property type="match status" value="1"/>
</dbReference>
<dbReference type="HAMAP" id="MF_00165">
    <property type="entry name" value="Thymidylate_kinase"/>
    <property type="match status" value="1"/>
</dbReference>
<dbReference type="InterPro" id="IPR027417">
    <property type="entry name" value="P-loop_NTPase"/>
</dbReference>
<dbReference type="InterPro" id="IPR039430">
    <property type="entry name" value="Thymidylate_kin-like_dom"/>
</dbReference>
<dbReference type="InterPro" id="IPR018094">
    <property type="entry name" value="Thymidylate_kinase"/>
</dbReference>
<dbReference type="NCBIfam" id="TIGR00041">
    <property type="entry name" value="DTMP_kinase"/>
    <property type="match status" value="1"/>
</dbReference>
<dbReference type="PANTHER" id="PTHR10344">
    <property type="entry name" value="THYMIDYLATE KINASE"/>
    <property type="match status" value="1"/>
</dbReference>
<dbReference type="PANTHER" id="PTHR10344:SF4">
    <property type="entry name" value="UMP-CMP KINASE 2, MITOCHONDRIAL"/>
    <property type="match status" value="1"/>
</dbReference>
<dbReference type="Pfam" id="PF02223">
    <property type="entry name" value="Thymidylate_kin"/>
    <property type="match status" value="1"/>
</dbReference>
<dbReference type="SUPFAM" id="SSF52540">
    <property type="entry name" value="P-loop containing nucleoside triphosphate hydrolases"/>
    <property type="match status" value="1"/>
</dbReference>
<dbReference type="PROSITE" id="PS01331">
    <property type="entry name" value="THYMIDYLATE_KINASE"/>
    <property type="match status" value="1"/>
</dbReference>